<protein>
    <recommendedName>
        <fullName evidence="6">U7 snRNA-associated Sm-like protein LSm11</fullName>
    </recommendedName>
</protein>
<comment type="function">
    <text evidence="2">Component of the U7 snRNP complex that is involved in the histone 3'-end pre-mRNA processing. Increases U7 snRNA levels but not histone 3'-end pre-mRNA processing activity, when overexpressed. Binds specifically to the Sm-binding site of U7 snRNA.</text>
</comment>
<comment type="subunit">
    <text evidence="2">Component of the heptameric ring U7 snRNP complex.</text>
</comment>
<comment type="subcellular location">
    <subcellularLocation>
        <location evidence="1">Nucleus</location>
    </subcellularLocation>
</comment>
<comment type="similarity">
    <text evidence="6">Belongs to the snRNP Sm proteins family.</text>
</comment>
<comment type="sequence caution" evidence="6">
    <conflict type="erroneous initiation">
        <sequence resource="EMBL-CDS" id="AAI06509"/>
    </conflict>
    <text>Extended N-terminus.</text>
</comment>
<evidence type="ECO:0000250" key="1">
    <source>
        <dbReference type="UniProtKB" id="P83369"/>
    </source>
</evidence>
<evidence type="ECO:0000250" key="2">
    <source>
        <dbReference type="UniProtKB" id="Q8BUV6"/>
    </source>
</evidence>
<evidence type="ECO:0000255" key="3">
    <source>
        <dbReference type="PROSITE-ProRule" id="PRU01346"/>
    </source>
</evidence>
<evidence type="ECO:0000256" key="4">
    <source>
        <dbReference type="SAM" id="MobiDB-lite"/>
    </source>
</evidence>
<evidence type="ECO:0000303" key="5">
    <source>
    </source>
</evidence>
<evidence type="ECO:0000305" key="6"/>
<evidence type="ECO:0000312" key="7">
    <source>
        <dbReference type="EMBL" id="AAI06509.1"/>
    </source>
</evidence>
<sequence length="291" mass="32749">MAEEEDEAPGSCLDVSSESFNPLLALYSPQTPLPFPDIRCFNNLAEYESFLRGGARGRARGAQRGQSRGPGGKRKGRKPEPDPERIERLKQLMLPVEEGKVPVRPRRSRAPKNVLTRMPLHAGSPLGELNRCVQDRIRIRVHIRTFKGLRGVCSGFIVAFDKFWNMAMVDVDETYRKPVLGKAFYNEPQLTLTRLFDRLQLQEPGSHDPAKGRPAGPAETLTAPPSKKSTQPSERAAGPPVEPGPQGHSGNRPKQRRRNRKEKVDYQQVFTRHLKQIFIRGENVLLVHIAE</sequence>
<feature type="chain" id="PRO_0000390505" description="U7 snRNA-associated Sm-like protein LSm11">
    <location>
        <begin position="1"/>
        <end position="291"/>
    </location>
</feature>
<feature type="domain" description="Sm" evidence="3">
    <location>
        <begin position="124"/>
        <end position="199"/>
    </location>
</feature>
<feature type="region of interest" description="Disordered" evidence="4">
    <location>
        <begin position="55"/>
        <end position="84"/>
    </location>
</feature>
<feature type="region of interest" description="SM">
    <location>
        <begin position="155"/>
        <end position="289"/>
    </location>
</feature>
<feature type="region of interest" description="Disordered" evidence="4">
    <location>
        <begin position="203"/>
        <end position="266"/>
    </location>
</feature>
<feature type="compositionally biased region" description="Basic residues" evidence="4">
    <location>
        <begin position="251"/>
        <end position="261"/>
    </location>
</feature>
<gene>
    <name evidence="5" type="primary">lsm11</name>
</gene>
<keyword id="KW-0507">mRNA processing</keyword>
<keyword id="KW-0539">Nucleus</keyword>
<keyword id="KW-1185">Reference proteome</keyword>
<keyword id="KW-0677">Repeat</keyword>
<keyword id="KW-0687">Ribonucleoprotein</keyword>
<keyword id="KW-0694">RNA-binding</keyword>
<organism>
    <name type="scientific">Xenopus laevis</name>
    <name type="common">African clawed frog</name>
    <dbReference type="NCBI Taxonomy" id="8355"/>
    <lineage>
        <taxon>Eukaryota</taxon>
        <taxon>Metazoa</taxon>
        <taxon>Chordata</taxon>
        <taxon>Craniata</taxon>
        <taxon>Vertebrata</taxon>
        <taxon>Euteleostomi</taxon>
        <taxon>Amphibia</taxon>
        <taxon>Batrachia</taxon>
        <taxon>Anura</taxon>
        <taxon>Pipoidea</taxon>
        <taxon>Pipidae</taxon>
        <taxon>Xenopodinae</taxon>
        <taxon>Xenopus</taxon>
        <taxon>Xenopus</taxon>
    </lineage>
</organism>
<reference key="1">
    <citation type="journal article" date="2016" name="Nature">
        <title>Genome evolution in the allotetraploid frog Xenopus laevis.</title>
        <authorList>
            <person name="Session A.M."/>
            <person name="Uno Y."/>
            <person name="Kwon T."/>
            <person name="Chapman J.A."/>
            <person name="Toyoda A."/>
            <person name="Takahashi S."/>
            <person name="Fukui A."/>
            <person name="Hikosaka A."/>
            <person name="Suzuki A."/>
            <person name="Kondo M."/>
            <person name="van Heeringen S.J."/>
            <person name="Quigley I."/>
            <person name="Heinz S."/>
            <person name="Ogino H."/>
            <person name="Ochi H."/>
            <person name="Hellsten U."/>
            <person name="Lyons J.B."/>
            <person name="Simakov O."/>
            <person name="Putnam N."/>
            <person name="Stites J."/>
            <person name="Kuroki Y."/>
            <person name="Tanaka T."/>
            <person name="Michiue T."/>
            <person name="Watanabe M."/>
            <person name="Bogdanovic O."/>
            <person name="Lister R."/>
            <person name="Georgiou G."/>
            <person name="Paranjpe S.S."/>
            <person name="van Kruijsbergen I."/>
            <person name="Shu S."/>
            <person name="Carlson J."/>
            <person name="Kinoshita T."/>
            <person name="Ohta Y."/>
            <person name="Mawaribuchi S."/>
            <person name="Jenkins J."/>
            <person name="Grimwood J."/>
            <person name="Schmutz J."/>
            <person name="Mitros T."/>
            <person name="Mozaffari S.V."/>
            <person name="Suzuki Y."/>
            <person name="Haramoto Y."/>
            <person name="Yamamoto T.S."/>
            <person name="Takagi C."/>
            <person name="Heald R."/>
            <person name="Miller K."/>
            <person name="Haudenschild C."/>
            <person name="Kitzman J."/>
            <person name="Nakayama T."/>
            <person name="Izutsu Y."/>
            <person name="Robert J."/>
            <person name="Fortriede J."/>
            <person name="Burns K."/>
            <person name="Lotay V."/>
            <person name="Karimi K."/>
            <person name="Yasuoka Y."/>
            <person name="Dichmann D.S."/>
            <person name="Flajnik M.F."/>
            <person name="Houston D.W."/>
            <person name="Shendure J."/>
            <person name="DuPasquier L."/>
            <person name="Vize P.D."/>
            <person name="Zorn A.M."/>
            <person name="Ito M."/>
            <person name="Marcotte E.M."/>
            <person name="Wallingford J.B."/>
            <person name="Ito Y."/>
            <person name="Asashima M."/>
            <person name="Ueno N."/>
            <person name="Matsuda Y."/>
            <person name="Veenstra G.J."/>
            <person name="Fujiyama A."/>
            <person name="Harland R.M."/>
            <person name="Taira M."/>
            <person name="Rokhsar D.S."/>
        </authorList>
    </citation>
    <scope>NUCLEOTIDE SEQUENCE [LARGE SCALE GENOMIC DNA]</scope>
    <source>
        <strain>J</strain>
    </source>
</reference>
<reference key="2">
    <citation type="journal article" date="2003" name="Genes Dev.">
        <title>Unique Sm core structure of U7 snRNPs: assembly by a specialized SMN complex and the role of a new component, Lsm11, in histone RNA processing.</title>
        <authorList>
            <person name="Pillai R.S."/>
            <person name="Grimmler M."/>
            <person name="Meister G."/>
            <person name="Will C.L."/>
            <person name="Luehrmann R."/>
            <person name="Fischer U."/>
            <person name="Schuemperli D."/>
        </authorList>
    </citation>
    <scope>NUCLEOTIDE SEQUENCE [MRNA]</scope>
</reference>
<reference evidence="7" key="3">
    <citation type="submission" date="2005-10" db="EMBL/GenBank/DDBJ databases">
        <authorList>
            <consortium name="NIH - Xenopus Gene Collection (XGC) project"/>
        </authorList>
    </citation>
    <scope>NUCLEOTIDE SEQUENCE [LARGE SCALE MRNA]</scope>
    <source>
        <tissue evidence="7">Testis</tissue>
    </source>
</reference>
<accession>Q7T076</accession>
<accession>A0A1L8GQX3</accession>
<accession>Q3KPW8</accession>
<dbReference type="EMBL" id="AF514310">
    <property type="protein sequence ID" value="AAQ08119.1"/>
    <property type="molecule type" value="mRNA"/>
</dbReference>
<dbReference type="EMBL" id="CM004471">
    <property type="protein sequence ID" value="OCT86263.1"/>
    <property type="molecule type" value="Genomic_DNA"/>
</dbReference>
<dbReference type="EMBL" id="BC106508">
    <property type="protein sequence ID" value="AAI06509.1"/>
    <property type="status" value="ALT_INIT"/>
    <property type="molecule type" value="mRNA"/>
</dbReference>
<dbReference type="SMR" id="Q7T076"/>
<dbReference type="IntAct" id="Q7T076">
    <property type="interactions" value="1"/>
</dbReference>
<dbReference type="STRING" id="8355.A0A1L8GQX3"/>
<dbReference type="PaxDb" id="8355-A0A1L8GQX3"/>
<dbReference type="GeneID" id="100381151"/>
<dbReference type="KEGG" id="xla:100381151"/>
<dbReference type="CTD" id="100381151"/>
<dbReference type="OMA" id="QETSECA"/>
<dbReference type="OrthoDB" id="10002367at2759"/>
<dbReference type="Proteomes" id="UP000186698">
    <property type="component" value="Chromosome 3S"/>
</dbReference>
<dbReference type="Proteomes" id="UP000694892">
    <property type="component" value="Chromosome 3S"/>
</dbReference>
<dbReference type="Bgee" id="100381151">
    <property type="expression patterns" value="Expressed in oocyte and 19 other cell types or tissues"/>
</dbReference>
<dbReference type="GO" id="GO:0005683">
    <property type="term" value="C:U7 snRNP"/>
    <property type="evidence" value="ECO:0000318"/>
    <property type="project" value="GO_Central"/>
</dbReference>
<dbReference type="GO" id="GO:0071209">
    <property type="term" value="F:U7 snRNA binding"/>
    <property type="evidence" value="ECO:0000318"/>
    <property type="project" value="GO_Central"/>
</dbReference>
<dbReference type="GO" id="GO:0006398">
    <property type="term" value="P:mRNA 3'-end processing by stem-loop binding and cleavage"/>
    <property type="evidence" value="ECO:0000250"/>
    <property type="project" value="UniProtKB"/>
</dbReference>
<dbReference type="GO" id="GO:1902275">
    <property type="term" value="P:regulation of chromatin organization"/>
    <property type="evidence" value="ECO:0000250"/>
    <property type="project" value="UniProtKB"/>
</dbReference>
<dbReference type="CDD" id="cd01739">
    <property type="entry name" value="LSm11_M"/>
    <property type="match status" value="1"/>
</dbReference>
<dbReference type="Gene3D" id="2.30.30.100">
    <property type="match status" value="1"/>
</dbReference>
<dbReference type="InterPro" id="IPR039267">
    <property type="entry name" value="Lsm11"/>
</dbReference>
<dbReference type="InterPro" id="IPR034109">
    <property type="entry name" value="Lsm11_M"/>
</dbReference>
<dbReference type="InterPro" id="IPR010920">
    <property type="entry name" value="LSM_dom_sf"/>
</dbReference>
<dbReference type="InterPro" id="IPR047575">
    <property type="entry name" value="Sm"/>
</dbReference>
<dbReference type="InterPro" id="IPR001163">
    <property type="entry name" value="Sm_dom_euk/arc"/>
</dbReference>
<dbReference type="PANTHER" id="PTHR21415">
    <property type="entry name" value="U7 SNRNA-ASSOCIATED SM-LIKE PROTEIN LSM11"/>
    <property type="match status" value="1"/>
</dbReference>
<dbReference type="PANTHER" id="PTHR21415:SF1">
    <property type="entry name" value="U7 SNRNA-ASSOCIATED SM-LIKE PROTEIN LSM11"/>
    <property type="match status" value="1"/>
</dbReference>
<dbReference type="SMART" id="SM00651">
    <property type="entry name" value="Sm"/>
    <property type="match status" value="1"/>
</dbReference>
<dbReference type="SUPFAM" id="SSF50182">
    <property type="entry name" value="Sm-like ribonucleoproteins"/>
    <property type="match status" value="1"/>
</dbReference>
<dbReference type="PROSITE" id="PS52002">
    <property type="entry name" value="SM"/>
    <property type="match status" value="1"/>
</dbReference>
<proteinExistence type="evidence at transcript level"/>
<name>LSM11_XENLA</name>